<sequence length="282" mass="31824">MGGLWRPAWRRVVFCGWSWSHLGRPTRAAERAEPCLRPGRSGPAGTEQGLRRLGTWRRPSPAEQPARRPKSTNPYTRSQEEDWRRRNKTVLTYMAAAAVGMLGASYAAVPLYRLYCQTTGLGGSAVAGHASDQIENMVPVKDRIIKITFNADVHASLQWNFRPQQTEIYVVPGETALAFYKAKNPTDKPVIGISTYNVVPFEAGQYFNKIQCFCFEEQRLNPQEEVDMPVFFYIDPEFAEDPRMVNVDLITLSYTFFEAKEGHTLPVPGYNSNQQLSPASNL</sequence>
<keyword id="KW-0186">Copper</keyword>
<keyword id="KW-0472">Membrane</keyword>
<keyword id="KW-0496">Mitochondrion</keyword>
<keyword id="KW-0999">Mitochondrion inner membrane</keyword>
<keyword id="KW-1185">Reference proteome</keyword>
<keyword id="KW-0809">Transit peptide</keyword>
<keyword id="KW-0812">Transmembrane</keyword>
<keyword id="KW-1133">Transmembrane helix</keyword>
<evidence type="ECO:0000250" key="1"/>
<evidence type="ECO:0000250" key="2">
    <source>
        <dbReference type="UniProtKB" id="Q9Y6N1"/>
    </source>
</evidence>
<evidence type="ECO:0000255" key="3"/>
<evidence type="ECO:0000256" key="4">
    <source>
        <dbReference type="SAM" id="MobiDB-lite"/>
    </source>
</evidence>
<evidence type="ECO:0000305" key="5"/>
<feature type="transit peptide" description="Mitochondrion" evidence="3">
    <location>
        <begin position="1"/>
        <end position="28"/>
    </location>
</feature>
<feature type="chain" id="PRO_0000311197" description="Cytochrome c oxidase assembly protein COX11, mitochondrial">
    <location>
        <begin position="29"/>
        <end position="282"/>
    </location>
</feature>
<feature type="topological domain" description="Mitochondrial matrix" evidence="2">
    <location>
        <begin position="29"/>
        <end position="90"/>
    </location>
</feature>
<feature type="transmembrane region" description="Helical" evidence="3">
    <location>
        <begin position="91"/>
        <end position="109"/>
    </location>
</feature>
<feature type="topological domain" description="Mitochondrial intermembrane" evidence="2">
    <location>
        <begin position="110"/>
        <end position="282"/>
    </location>
</feature>
<feature type="region of interest" description="Disordered" evidence="4">
    <location>
        <begin position="28"/>
        <end position="83"/>
    </location>
</feature>
<name>COX11_BOVIN</name>
<dbReference type="EMBL" id="BC133444">
    <property type="protein sequence ID" value="AAI33445.1"/>
    <property type="molecule type" value="mRNA"/>
</dbReference>
<dbReference type="RefSeq" id="NP_001076872.1">
    <property type="nucleotide sequence ID" value="NM_001083403.2"/>
</dbReference>
<dbReference type="SMR" id="A3KMZ6"/>
<dbReference type="FunCoup" id="A3KMZ6">
    <property type="interactions" value="2422"/>
</dbReference>
<dbReference type="STRING" id="9913.ENSBTAP00000009231"/>
<dbReference type="PaxDb" id="9913-ENSBTAP00000009231"/>
<dbReference type="Ensembl" id="ENSBTAT00000009231.6">
    <property type="protein sequence ID" value="ENSBTAP00000009231.5"/>
    <property type="gene ID" value="ENSBTAG00000007015.6"/>
</dbReference>
<dbReference type="GeneID" id="510509"/>
<dbReference type="KEGG" id="bta:510509"/>
<dbReference type="CTD" id="1353"/>
<dbReference type="VEuPathDB" id="HostDB:ENSBTAG00000007015"/>
<dbReference type="VGNC" id="VGNC:55805">
    <property type="gene designation" value="COX11"/>
</dbReference>
<dbReference type="eggNOG" id="KOG2540">
    <property type="taxonomic scope" value="Eukaryota"/>
</dbReference>
<dbReference type="GeneTree" id="ENSGT00390000007512"/>
<dbReference type="InParanoid" id="A3KMZ6"/>
<dbReference type="OMA" id="NKLECFC"/>
<dbReference type="OrthoDB" id="1704689at2759"/>
<dbReference type="Reactome" id="R-BTA-9864848">
    <property type="pathway name" value="Complex IV assembly"/>
</dbReference>
<dbReference type="Proteomes" id="UP000009136">
    <property type="component" value="Chromosome 19"/>
</dbReference>
<dbReference type="Bgee" id="ENSBTAG00000007015">
    <property type="expression patterns" value="Expressed in rumen papilla and 103 other cell types or tissues"/>
</dbReference>
<dbReference type="GO" id="GO:0005743">
    <property type="term" value="C:mitochondrial inner membrane"/>
    <property type="evidence" value="ECO:0000250"/>
    <property type="project" value="UniProtKB"/>
</dbReference>
<dbReference type="GO" id="GO:0032991">
    <property type="term" value="C:protein-containing complex"/>
    <property type="evidence" value="ECO:0007669"/>
    <property type="project" value="Ensembl"/>
</dbReference>
<dbReference type="GO" id="GO:0005507">
    <property type="term" value="F:copper ion binding"/>
    <property type="evidence" value="ECO:0007669"/>
    <property type="project" value="InterPro"/>
</dbReference>
<dbReference type="GO" id="GO:0006754">
    <property type="term" value="P:ATP biosynthetic process"/>
    <property type="evidence" value="ECO:0000250"/>
    <property type="project" value="UniProtKB"/>
</dbReference>
<dbReference type="GO" id="GO:0030003">
    <property type="term" value="P:intracellular monoatomic cation homeostasis"/>
    <property type="evidence" value="ECO:0007669"/>
    <property type="project" value="Ensembl"/>
</dbReference>
<dbReference type="FunFam" id="2.60.370.10:FF:000001">
    <property type="entry name" value="COX11 cytochrome c oxidase assembly homolog"/>
    <property type="match status" value="1"/>
</dbReference>
<dbReference type="Gene3D" id="2.60.370.10">
    <property type="entry name" value="Ctag/Cox11"/>
    <property type="match status" value="1"/>
</dbReference>
<dbReference type="HAMAP" id="MF_00155">
    <property type="entry name" value="CtaG"/>
    <property type="match status" value="1"/>
</dbReference>
<dbReference type="InterPro" id="IPR023471">
    <property type="entry name" value="CtaG/Cox11_dom_sf"/>
</dbReference>
<dbReference type="InterPro" id="IPR007533">
    <property type="entry name" value="Cyt_c_oxidase_assmbl_CtaG"/>
</dbReference>
<dbReference type="NCBIfam" id="NF003465">
    <property type="entry name" value="PRK05089.1"/>
    <property type="match status" value="1"/>
</dbReference>
<dbReference type="PANTHER" id="PTHR21320:SF3">
    <property type="entry name" value="CYTOCHROME C OXIDASE ASSEMBLY PROTEIN COX11, MITOCHONDRIAL-RELATED"/>
    <property type="match status" value="1"/>
</dbReference>
<dbReference type="PANTHER" id="PTHR21320">
    <property type="entry name" value="CYTOCHROME C OXIDASE ASSEMBLY PROTEIN COX11-RELATED"/>
    <property type="match status" value="1"/>
</dbReference>
<dbReference type="Pfam" id="PF04442">
    <property type="entry name" value="CtaG_Cox11"/>
    <property type="match status" value="1"/>
</dbReference>
<dbReference type="SUPFAM" id="SSF110111">
    <property type="entry name" value="Ctag/Cox11"/>
    <property type="match status" value="1"/>
</dbReference>
<organism>
    <name type="scientific">Bos taurus</name>
    <name type="common">Bovine</name>
    <dbReference type="NCBI Taxonomy" id="9913"/>
    <lineage>
        <taxon>Eukaryota</taxon>
        <taxon>Metazoa</taxon>
        <taxon>Chordata</taxon>
        <taxon>Craniata</taxon>
        <taxon>Vertebrata</taxon>
        <taxon>Euteleostomi</taxon>
        <taxon>Mammalia</taxon>
        <taxon>Eutheria</taxon>
        <taxon>Laurasiatheria</taxon>
        <taxon>Artiodactyla</taxon>
        <taxon>Ruminantia</taxon>
        <taxon>Pecora</taxon>
        <taxon>Bovidae</taxon>
        <taxon>Bovinae</taxon>
        <taxon>Bos</taxon>
    </lineage>
</organism>
<gene>
    <name type="primary">COX11</name>
</gene>
<comment type="function">
    <text evidence="1">Exerts its effect at some terminal stage of cytochrome c oxidase synthesis, probably by being involved in the insertion of the copper B into subunit I.</text>
</comment>
<comment type="subunit">
    <text evidence="2">Interacts with CNNM4/ACDP4. Interacts with RANBP2.</text>
</comment>
<comment type="subcellular location">
    <subcellularLocation>
        <location evidence="2">Mitochondrion inner membrane</location>
        <topology evidence="3">Single-pass membrane protein</topology>
        <orientation evidence="2">Intermembrane side</orientation>
    </subcellularLocation>
</comment>
<comment type="similarity">
    <text evidence="5">Belongs to the COX11/CtaG family.</text>
</comment>
<reference key="1">
    <citation type="submission" date="2007-02" db="EMBL/GenBank/DDBJ databases">
        <authorList>
            <consortium name="NIH - Mammalian Gene Collection (MGC) project"/>
        </authorList>
    </citation>
    <scope>NUCLEOTIDE SEQUENCE [LARGE SCALE MRNA]</scope>
    <source>
        <strain>Hereford</strain>
        <tissue>Fetal pons</tissue>
    </source>
</reference>
<accession>A3KMZ6</accession>
<proteinExistence type="evidence at transcript level"/>
<protein>
    <recommendedName>
        <fullName>Cytochrome c oxidase assembly protein COX11, mitochondrial</fullName>
    </recommendedName>
</protein>